<protein>
    <recommendedName>
        <fullName>Sentan</fullName>
    </recommendedName>
    <alternativeName>
        <fullName>Protein S100-A1-like</fullName>
    </alternativeName>
    <alternativeName>
        <fullName>S100 calcium-binding protein A1-like</fullName>
    </alternativeName>
</protein>
<accession>A6NMZ2</accession>
<accession>B7FF65</accession>
<reference key="1">
    <citation type="journal article" date="2004" name="Int. J. Mol. Med.">
        <title>Transcriptional gene expression profile of human nasopharynx.</title>
        <authorList>
            <person name="Liu X.-Q."/>
            <person name="Zhou Y."/>
            <person name="Zhang L.-J."/>
            <person name="Xu H."/>
            <person name="Chen H.-K."/>
            <person name="Pan Z.-G."/>
            <person name="Zeng Y.-X."/>
        </authorList>
    </citation>
    <scope>NUCLEOTIDE SEQUENCE [LARGE SCALE MRNA]</scope>
    <source>
        <tissue>Nasopharynx</tissue>
    </source>
</reference>
<reference key="2">
    <citation type="journal article" date="2006" name="Nature">
        <title>The DNA sequence, annotation and analysis of human chromosome 3.</title>
        <authorList>
            <person name="Muzny D.M."/>
            <person name="Scherer S.E."/>
            <person name="Kaul R."/>
            <person name="Wang J."/>
            <person name="Yu J."/>
            <person name="Sudbrak R."/>
            <person name="Buhay C.J."/>
            <person name="Chen R."/>
            <person name="Cree A."/>
            <person name="Ding Y."/>
            <person name="Dugan-Rocha S."/>
            <person name="Gill R."/>
            <person name="Gunaratne P."/>
            <person name="Harris R.A."/>
            <person name="Hawes A.C."/>
            <person name="Hernandez J."/>
            <person name="Hodgson A.V."/>
            <person name="Hume J."/>
            <person name="Jackson A."/>
            <person name="Khan Z.M."/>
            <person name="Kovar-Smith C."/>
            <person name="Lewis L.R."/>
            <person name="Lozado R.J."/>
            <person name="Metzker M.L."/>
            <person name="Milosavljevic A."/>
            <person name="Miner G.R."/>
            <person name="Morgan M.B."/>
            <person name="Nazareth L.V."/>
            <person name="Scott G."/>
            <person name="Sodergren E."/>
            <person name="Song X.-Z."/>
            <person name="Steffen D."/>
            <person name="Wei S."/>
            <person name="Wheeler D.A."/>
            <person name="Wright M.W."/>
            <person name="Worley K.C."/>
            <person name="Yuan Y."/>
            <person name="Zhang Z."/>
            <person name="Adams C.Q."/>
            <person name="Ansari-Lari M.A."/>
            <person name="Ayele M."/>
            <person name="Brown M.J."/>
            <person name="Chen G."/>
            <person name="Chen Z."/>
            <person name="Clendenning J."/>
            <person name="Clerc-Blankenburg K.P."/>
            <person name="Chen R."/>
            <person name="Chen Z."/>
            <person name="Davis C."/>
            <person name="Delgado O."/>
            <person name="Dinh H.H."/>
            <person name="Dong W."/>
            <person name="Draper H."/>
            <person name="Ernst S."/>
            <person name="Fu G."/>
            <person name="Gonzalez-Garay M.L."/>
            <person name="Garcia D.K."/>
            <person name="Gillett W."/>
            <person name="Gu J."/>
            <person name="Hao B."/>
            <person name="Haugen E."/>
            <person name="Havlak P."/>
            <person name="He X."/>
            <person name="Hennig S."/>
            <person name="Hu S."/>
            <person name="Huang W."/>
            <person name="Jackson L.R."/>
            <person name="Jacob L.S."/>
            <person name="Kelly S.H."/>
            <person name="Kube M."/>
            <person name="Levy R."/>
            <person name="Li Z."/>
            <person name="Liu B."/>
            <person name="Liu J."/>
            <person name="Liu W."/>
            <person name="Lu J."/>
            <person name="Maheshwari M."/>
            <person name="Nguyen B.-V."/>
            <person name="Okwuonu G.O."/>
            <person name="Palmeiri A."/>
            <person name="Pasternak S."/>
            <person name="Perez L.M."/>
            <person name="Phelps K.A."/>
            <person name="Plopper F.J."/>
            <person name="Qiang B."/>
            <person name="Raymond C."/>
            <person name="Rodriguez R."/>
            <person name="Saenphimmachak C."/>
            <person name="Santibanez J."/>
            <person name="Shen H."/>
            <person name="Shen Y."/>
            <person name="Subramanian S."/>
            <person name="Tabor P.E."/>
            <person name="Verduzco D."/>
            <person name="Waldron L."/>
            <person name="Wang J."/>
            <person name="Wang J."/>
            <person name="Wang Q."/>
            <person name="Williams G.A."/>
            <person name="Wong G.K.-S."/>
            <person name="Yao Z."/>
            <person name="Zhang J."/>
            <person name="Zhang X."/>
            <person name="Zhao G."/>
            <person name="Zhou J."/>
            <person name="Zhou Y."/>
            <person name="Nelson D."/>
            <person name="Lehrach H."/>
            <person name="Reinhardt R."/>
            <person name="Naylor S.L."/>
            <person name="Yang H."/>
            <person name="Olson M."/>
            <person name="Weinstock G."/>
            <person name="Gibbs R.A."/>
        </authorList>
    </citation>
    <scope>NUCLEOTIDE SEQUENCE [LARGE SCALE GENOMIC DNA]</scope>
</reference>
<reference key="3">
    <citation type="journal article" date="2008" name="Mol. Biol. Cell">
        <title>Sentan: a novel specific component of the apical structure of vertebrate motile cilia.</title>
        <authorList>
            <person name="Kubo A."/>
            <person name="Yuba-Kubo A."/>
            <person name="Tsukita S."/>
            <person name="Tsukita S."/>
            <person name="Amagai M."/>
        </authorList>
    </citation>
    <scope>IDENTIFICATION</scope>
</reference>
<evidence type="ECO:0000250" key="1"/>
<evidence type="ECO:0000256" key="2">
    <source>
        <dbReference type="SAM" id="MobiDB-lite"/>
    </source>
</evidence>
<evidence type="ECO:0000305" key="3"/>
<dbReference type="EMBL" id="CD690073">
    <property type="status" value="NOT_ANNOTATED_CDS"/>
    <property type="molecule type" value="mRNA"/>
</dbReference>
<dbReference type="EMBL" id="AC136289">
    <property type="status" value="NOT_ANNOTATED_CDS"/>
    <property type="molecule type" value="Genomic_DNA"/>
</dbReference>
<dbReference type="EMBL" id="BR000723">
    <property type="protein sequence ID" value="FAA00429.1"/>
    <property type="molecule type" value="mRNA"/>
</dbReference>
<dbReference type="CCDS" id="CCDS33779.1"/>
<dbReference type="RefSeq" id="NP_001074006.1">
    <property type="nucleotide sequence ID" value="NM_001080537.2"/>
</dbReference>
<dbReference type="SMR" id="A6NMZ2"/>
<dbReference type="STRING" id="9606.ENSP00000341442"/>
<dbReference type="iPTMnet" id="A6NMZ2"/>
<dbReference type="PhosphoSitePlus" id="A6NMZ2"/>
<dbReference type="BioMuta" id="SNTN"/>
<dbReference type="MassIVE" id="A6NMZ2"/>
<dbReference type="PaxDb" id="9606-ENSP00000341442"/>
<dbReference type="PeptideAtlas" id="A6NMZ2"/>
<dbReference type="ProteomicsDB" id="1571"/>
<dbReference type="Antibodypedia" id="50719">
    <property type="antibodies" value="16 antibodies from 6 providers"/>
</dbReference>
<dbReference type="DNASU" id="132203"/>
<dbReference type="Ensembl" id="ENST00000343837.8">
    <property type="protein sequence ID" value="ENSP00000341442.3"/>
    <property type="gene ID" value="ENSG00000188817.8"/>
</dbReference>
<dbReference type="GeneID" id="132203"/>
<dbReference type="KEGG" id="hsa:132203"/>
<dbReference type="MANE-Select" id="ENST00000343837.8">
    <property type="protein sequence ID" value="ENSP00000341442.3"/>
    <property type="RefSeq nucleotide sequence ID" value="NM_001080537.2"/>
    <property type="RefSeq protein sequence ID" value="NP_001074006.1"/>
</dbReference>
<dbReference type="UCSC" id="uc003dlr.4">
    <property type="organism name" value="human"/>
</dbReference>
<dbReference type="AGR" id="HGNC:33706"/>
<dbReference type="CTD" id="132203"/>
<dbReference type="DisGeNET" id="132203"/>
<dbReference type="GeneCards" id="SNTN"/>
<dbReference type="HGNC" id="HGNC:33706">
    <property type="gene designation" value="SNTN"/>
</dbReference>
<dbReference type="HPA" id="ENSG00000188817">
    <property type="expression patterns" value="Tissue enriched (fallopian)"/>
</dbReference>
<dbReference type="MIM" id="617832">
    <property type="type" value="gene"/>
</dbReference>
<dbReference type="neXtProt" id="NX_A6NMZ2"/>
<dbReference type="OpenTargets" id="ENSG00000188817"/>
<dbReference type="PharmGKB" id="PA164726205"/>
<dbReference type="VEuPathDB" id="HostDB:ENSG00000188817"/>
<dbReference type="eggNOG" id="ENOG502S6AH">
    <property type="taxonomic scope" value="Eukaryota"/>
</dbReference>
<dbReference type="GeneTree" id="ENSGT00390000003322"/>
<dbReference type="InParanoid" id="A6NMZ2"/>
<dbReference type="OMA" id="MCGCRAS"/>
<dbReference type="OrthoDB" id="9362863at2759"/>
<dbReference type="PAN-GO" id="A6NMZ2">
    <property type="GO annotations" value="2 GO annotations based on evolutionary models"/>
</dbReference>
<dbReference type="PhylomeDB" id="A6NMZ2"/>
<dbReference type="TreeFam" id="TF335855"/>
<dbReference type="PathwayCommons" id="A6NMZ2"/>
<dbReference type="BioGRID-ORCS" id="132203">
    <property type="hits" value="16 hits in 1138 CRISPR screens"/>
</dbReference>
<dbReference type="ChiTaRS" id="SNTN">
    <property type="organism name" value="human"/>
</dbReference>
<dbReference type="GenomeRNAi" id="132203"/>
<dbReference type="Pharos" id="A6NMZ2">
    <property type="development level" value="Tdark"/>
</dbReference>
<dbReference type="PRO" id="PR:A6NMZ2"/>
<dbReference type="Proteomes" id="UP000005640">
    <property type="component" value="Chromosome 3"/>
</dbReference>
<dbReference type="RNAct" id="A6NMZ2">
    <property type="molecule type" value="protein"/>
</dbReference>
<dbReference type="Bgee" id="ENSG00000188817">
    <property type="expression patterns" value="Expressed in bronchial epithelial cell and 96 other cell types or tissues"/>
</dbReference>
<dbReference type="ExpressionAtlas" id="A6NMZ2">
    <property type="expression patterns" value="baseline and differential"/>
</dbReference>
<dbReference type="GO" id="GO:0005929">
    <property type="term" value="C:cilium"/>
    <property type="evidence" value="ECO:0007669"/>
    <property type="project" value="UniProtKB-SubCell"/>
</dbReference>
<dbReference type="GO" id="GO:0005509">
    <property type="term" value="F:calcium ion binding"/>
    <property type="evidence" value="ECO:0000318"/>
    <property type="project" value="GO_Central"/>
</dbReference>
<dbReference type="GO" id="GO:0048306">
    <property type="term" value="F:calcium-dependent protein binding"/>
    <property type="evidence" value="ECO:0000318"/>
    <property type="project" value="GO_Central"/>
</dbReference>
<dbReference type="GO" id="GO:0046914">
    <property type="term" value="F:transition metal ion binding"/>
    <property type="evidence" value="ECO:0007669"/>
    <property type="project" value="InterPro"/>
</dbReference>
<dbReference type="CDD" id="cd00213">
    <property type="entry name" value="S-100"/>
    <property type="match status" value="1"/>
</dbReference>
<dbReference type="Gene3D" id="1.10.238.10">
    <property type="entry name" value="EF-hand"/>
    <property type="match status" value="1"/>
</dbReference>
<dbReference type="InterPro" id="IPR011992">
    <property type="entry name" value="EF-hand-dom_pair"/>
</dbReference>
<dbReference type="InterPro" id="IPR034325">
    <property type="entry name" value="S-100_dom"/>
</dbReference>
<dbReference type="InterPro" id="IPR013787">
    <property type="entry name" value="S100_Ca-bd_sub"/>
</dbReference>
<dbReference type="PANTHER" id="PTHR11639:SF134">
    <property type="entry name" value="PROTEIN S100-A1-RELATED"/>
    <property type="match status" value="1"/>
</dbReference>
<dbReference type="PANTHER" id="PTHR11639">
    <property type="entry name" value="S100 CALCIUM-BINDING PROTEIN"/>
    <property type="match status" value="1"/>
</dbReference>
<dbReference type="SMART" id="SM01394">
    <property type="entry name" value="S_100"/>
    <property type="match status" value="1"/>
</dbReference>
<dbReference type="SUPFAM" id="SSF47473">
    <property type="entry name" value="EF-hand"/>
    <property type="match status" value="1"/>
</dbReference>
<organism>
    <name type="scientific">Homo sapiens</name>
    <name type="common">Human</name>
    <dbReference type="NCBI Taxonomy" id="9606"/>
    <lineage>
        <taxon>Eukaryota</taxon>
        <taxon>Metazoa</taxon>
        <taxon>Chordata</taxon>
        <taxon>Craniata</taxon>
        <taxon>Vertebrata</taxon>
        <taxon>Euteleostomi</taxon>
        <taxon>Mammalia</taxon>
        <taxon>Eutheria</taxon>
        <taxon>Euarchontoglires</taxon>
        <taxon>Primates</taxon>
        <taxon>Haplorrhini</taxon>
        <taxon>Catarrhini</taxon>
        <taxon>Hominidae</taxon>
        <taxon>Homo</taxon>
    </lineage>
</organism>
<sequence>MGGCMHSTQDKSLHLEGDPNPSAAPTSTCAPRKMPKRISISKQLASVKALRKCSDLEKAIATTALIFRNSSDSDGKLEKAIAKDLLQTQFRNFAEGQETKPKYREILSELDEHTENKLDFEDFMILLLSITVMSDLLQNIRNVKIMK</sequence>
<comment type="function">
    <text evidence="1">May be a component of the linker structure that bridges the ciliary membrane and peripheral singlet microtubules.</text>
</comment>
<comment type="subcellular location">
    <subcellularLocation>
        <location evidence="1">Cell projection</location>
        <location evidence="1">Cilium</location>
    </subcellularLocation>
    <text evidence="1">Expressed exclusively at the cilium tip where it localizes between the cell membrane and peripheral A-subfibers.</text>
</comment>
<comment type="miscellaneous">
    <text>'Sentan' means 'tip' in Japanese.</text>
</comment>
<comment type="similarity">
    <text evidence="3">Belongs to the S-100 family.</text>
</comment>
<proteinExistence type="evidence at protein level"/>
<name>SNTAN_HUMAN</name>
<feature type="chain" id="PRO_0000342516" description="Sentan">
    <location>
        <begin position="1"/>
        <end position="147"/>
    </location>
</feature>
<feature type="region of interest" description="Disordered" evidence="2">
    <location>
        <begin position="1"/>
        <end position="32"/>
    </location>
</feature>
<feature type="compositionally biased region" description="Basic and acidic residues" evidence="2">
    <location>
        <begin position="8"/>
        <end position="17"/>
    </location>
</feature>
<keyword id="KW-0966">Cell projection</keyword>
<keyword id="KW-0969">Cilium</keyword>
<keyword id="KW-1267">Proteomics identification</keyword>
<keyword id="KW-1185">Reference proteome</keyword>
<gene>
    <name type="primary">SNTN</name>
    <name type="synonym">S100A1L</name>
</gene>